<dbReference type="EMBL" id="AL009126">
    <property type="protein sequence ID" value="CAB15347.1"/>
    <property type="molecule type" value="Genomic_DNA"/>
</dbReference>
<dbReference type="PIR" id="E70040">
    <property type="entry name" value="E70040"/>
</dbReference>
<dbReference type="RefSeq" id="NP_391222.1">
    <property type="nucleotide sequence ID" value="NC_000964.3"/>
</dbReference>
<dbReference type="RefSeq" id="WP_003243269.1">
    <property type="nucleotide sequence ID" value="NZ_OZ025638.1"/>
</dbReference>
<dbReference type="SMR" id="O32212"/>
<dbReference type="FunCoup" id="O32212">
    <property type="interactions" value="58"/>
</dbReference>
<dbReference type="IntAct" id="O32212">
    <property type="interactions" value="6"/>
</dbReference>
<dbReference type="STRING" id="224308.BSU33420"/>
<dbReference type="TCDB" id="2.A.36.3.2">
    <property type="family name" value="the monovalent cation:proton antiporter-1 (cpa1) family"/>
</dbReference>
<dbReference type="PaxDb" id="224308-BSU33420"/>
<dbReference type="EnsemblBacteria" id="CAB15347">
    <property type="protein sequence ID" value="CAB15347"/>
    <property type="gene ID" value="BSU_33420"/>
</dbReference>
<dbReference type="GeneID" id="936025"/>
<dbReference type="KEGG" id="bsu:BSU33420"/>
<dbReference type="PATRIC" id="fig|224308.179.peg.3627"/>
<dbReference type="eggNOG" id="COG0025">
    <property type="taxonomic scope" value="Bacteria"/>
</dbReference>
<dbReference type="InParanoid" id="O32212"/>
<dbReference type="OrthoDB" id="9809206at2"/>
<dbReference type="PhylomeDB" id="O32212"/>
<dbReference type="BioCyc" id="BSUB:BSU33420-MONOMER"/>
<dbReference type="Proteomes" id="UP000001570">
    <property type="component" value="Chromosome"/>
</dbReference>
<dbReference type="GO" id="GO:0005886">
    <property type="term" value="C:plasma membrane"/>
    <property type="evidence" value="ECO:0000318"/>
    <property type="project" value="GO_Central"/>
</dbReference>
<dbReference type="GO" id="GO:0015386">
    <property type="term" value="F:potassium:proton antiporter activity"/>
    <property type="evidence" value="ECO:0000318"/>
    <property type="project" value="GO_Central"/>
</dbReference>
<dbReference type="GO" id="GO:0015385">
    <property type="term" value="F:sodium:proton antiporter activity"/>
    <property type="evidence" value="ECO:0000318"/>
    <property type="project" value="GO_Central"/>
</dbReference>
<dbReference type="GO" id="GO:0071805">
    <property type="term" value="P:potassium ion transmembrane transport"/>
    <property type="evidence" value="ECO:0000318"/>
    <property type="project" value="GO_Central"/>
</dbReference>
<dbReference type="GO" id="GO:0051453">
    <property type="term" value="P:regulation of intracellular pH"/>
    <property type="evidence" value="ECO:0000318"/>
    <property type="project" value="GO_Central"/>
</dbReference>
<dbReference type="GO" id="GO:0098719">
    <property type="term" value="P:sodium ion import across plasma membrane"/>
    <property type="evidence" value="ECO:0000318"/>
    <property type="project" value="GO_Central"/>
</dbReference>
<dbReference type="Gene3D" id="6.10.140.1330">
    <property type="match status" value="1"/>
</dbReference>
<dbReference type="InterPro" id="IPR018422">
    <property type="entry name" value="Cation/H_exchanger_CPA1"/>
</dbReference>
<dbReference type="InterPro" id="IPR004705">
    <property type="entry name" value="Cation/H_exchanger_CPA1_bac"/>
</dbReference>
<dbReference type="InterPro" id="IPR006153">
    <property type="entry name" value="Cation/H_exchanger_TM"/>
</dbReference>
<dbReference type="NCBIfam" id="TIGR00831">
    <property type="entry name" value="a_cpa1"/>
    <property type="match status" value="1"/>
</dbReference>
<dbReference type="PANTHER" id="PTHR10110">
    <property type="entry name" value="SODIUM/HYDROGEN EXCHANGER"/>
    <property type="match status" value="1"/>
</dbReference>
<dbReference type="PANTHER" id="PTHR10110:SF86">
    <property type="entry name" value="SODIUM_HYDROGEN EXCHANGER 7"/>
    <property type="match status" value="1"/>
</dbReference>
<dbReference type="Pfam" id="PF00999">
    <property type="entry name" value="Na_H_Exchanger"/>
    <property type="match status" value="1"/>
</dbReference>
<reference key="1">
    <citation type="journal article" date="1997" name="Nature">
        <title>The complete genome sequence of the Gram-positive bacterium Bacillus subtilis.</title>
        <authorList>
            <person name="Kunst F."/>
            <person name="Ogasawara N."/>
            <person name="Moszer I."/>
            <person name="Albertini A.M."/>
            <person name="Alloni G."/>
            <person name="Azevedo V."/>
            <person name="Bertero M.G."/>
            <person name="Bessieres P."/>
            <person name="Bolotin A."/>
            <person name="Borchert S."/>
            <person name="Borriss R."/>
            <person name="Boursier L."/>
            <person name="Brans A."/>
            <person name="Braun M."/>
            <person name="Brignell S.C."/>
            <person name="Bron S."/>
            <person name="Brouillet S."/>
            <person name="Bruschi C.V."/>
            <person name="Caldwell B."/>
            <person name="Capuano V."/>
            <person name="Carter N.M."/>
            <person name="Choi S.-K."/>
            <person name="Codani J.-J."/>
            <person name="Connerton I.F."/>
            <person name="Cummings N.J."/>
            <person name="Daniel R.A."/>
            <person name="Denizot F."/>
            <person name="Devine K.M."/>
            <person name="Duesterhoeft A."/>
            <person name="Ehrlich S.D."/>
            <person name="Emmerson P.T."/>
            <person name="Entian K.-D."/>
            <person name="Errington J."/>
            <person name="Fabret C."/>
            <person name="Ferrari E."/>
            <person name="Foulger D."/>
            <person name="Fritz C."/>
            <person name="Fujita M."/>
            <person name="Fujita Y."/>
            <person name="Fuma S."/>
            <person name="Galizzi A."/>
            <person name="Galleron N."/>
            <person name="Ghim S.-Y."/>
            <person name="Glaser P."/>
            <person name="Goffeau A."/>
            <person name="Golightly E.J."/>
            <person name="Grandi G."/>
            <person name="Guiseppi G."/>
            <person name="Guy B.J."/>
            <person name="Haga K."/>
            <person name="Haiech J."/>
            <person name="Harwood C.R."/>
            <person name="Henaut A."/>
            <person name="Hilbert H."/>
            <person name="Holsappel S."/>
            <person name="Hosono S."/>
            <person name="Hullo M.-F."/>
            <person name="Itaya M."/>
            <person name="Jones L.-M."/>
            <person name="Joris B."/>
            <person name="Karamata D."/>
            <person name="Kasahara Y."/>
            <person name="Klaerr-Blanchard M."/>
            <person name="Klein C."/>
            <person name="Kobayashi Y."/>
            <person name="Koetter P."/>
            <person name="Koningstein G."/>
            <person name="Krogh S."/>
            <person name="Kumano M."/>
            <person name="Kurita K."/>
            <person name="Lapidus A."/>
            <person name="Lardinois S."/>
            <person name="Lauber J."/>
            <person name="Lazarevic V."/>
            <person name="Lee S.-M."/>
            <person name="Levine A."/>
            <person name="Liu H."/>
            <person name="Masuda S."/>
            <person name="Mauel C."/>
            <person name="Medigue C."/>
            <person name="Medina N."/>
            <person name="Mellado R.P."/>
            <person name="Mizuno M."/>
            <person name="Moestl D."/>
            <person name="Nakai S."/>
            <person name="Noback M."/>
            <person name="Noone D."/>
            <person name="O'Reilly M."/>
            <person name="Ogawa K."/>
            <person name="Ogiwara A."/>
            <person name="Oudega B."/>
            <person name="Park S.-H."/>
            <person name="Parro V."/>
            <person name="Pohl T.M."/>
            <person name="Portetelle D."/>
            <person name="Porwollik S."/>
            <person name="Prescott A.M."/>
            <person name="Presecan E."/>
            <person name="Pujic P."/>
            <person name="Purnelle B."/>
            <person name="Rapoport G."/>
            <person name="Rey M."/>
            <person name="Reynolds S."/>
            <person name="Rieger M."/>
            <person name="Rivolta C."/>
            <person name="Rocha E."/>
            <person name="Roche B."/>
            <person name="Rose M."/>
            <person name="Sadaie Y."/>
            <person name="Sato T."/>
            <person name="Scanlan E."/>
            <person name="Schleich S."/>
            <person name="Schroeter R."/>
            <person name="Scoffone F."/>
            <person name="Sekiguchi J."/>
            <person name="Sekowska A."/>
            <person name="Seror S.J."/>
            <person name="Serror P."/>
            <person name="Shin B.-S."/>
            <person name="Soldo B."/>
            <person name="Sorokin A."/>
            <person name="Tacconi E."/>
            <person name="Takagi T."/>
            <person name="Takahashi H."/>
            <person name="Takemaru K."/>
            <person name="Takeuchi M."/>
            <person name="Tamakoshi A."/>
            <person name="Tanaka T."/>
            <person name="Terpstra P."/>
            <person name="Tognoni A."/>
            <person name="Tosato V."/>
            <person name="Uchiyama S."/>
            <person name="Vandenbol M."/>
            <person name="Vannier F."/>
            <person name="Vassarotti A."/>
            <person name="Viari A."/>
            <person name="Wambutt R."/>
            <person name="Wedler E."/>
            <person name="Wedler H."/>
            <person name="Weitzenegger T."/>
            <person name="Winters P."/>
            <person name="Wipat A."/>
            <person name="Yamamoto H."/>
            <person name="Yamane K."/>
            <person name="Yasumoto K."/>
            <person name="Yata K."/>
            <person name="Yoshida K."/>
            <person name="Yoshikawa H.-F."/>
            <person name="Zumstein E."/>
            <person name="Yoshikawa H."/>
            <person name="Danchin A."/>
        </authorList>
    </citation>
    <scope>NUCLEOTIDE SEQUENCE [LARGE SCALE GENOMIC DNA]</scope>
    <source>
        <strain>168</strain>
    </source>
</reference>
<reference key="2">
    <citation type="journal article" date="2005" name="Arch. Microbiol.">
        <title>NhaK, a novel monovalent cation/H+ antiporter of Bacillus subtilis.</title>
        <authorList>
            <person name="Fujisawa M."/>
            <person name="Kusumoto A."/>
            <person name="Wada Y."/>
            <person name="Tsuchiya T."/>
            <person name="Ito M."/>
        </authorList>
    </citation>
    <scope>FUNCTION IN MONOVALENT CATION EFFLUX</scope>
    <scope>INDUCTION</scope>
    <source>
        <strain>BD99 / MS94</strain>
    </source>
</reference>
<accession>O32212</accession>
<gene>
    <name type="primary">nhaK</name>
    <name type="synonym">yvgP</name>
    <name type="ordered locus">BSU33420</name>
</gene>
<feature type="chain" id="PRO_0000337074" description="Sodium, potassium, lithium and rubidium/H(+) antiporter">
    <location>
        <begin position="1"/>
        <end position="670"/>
    </location>
</feature>
<feature type="transmembrane region" description="Helical" evidence="1">
    <location>
        <begin position="5"/>
        <end position="27"/>
    </location>
</feature>
<feature type="transmembrane region" description="Helical" evidence="1">
    <location>
        <begin position="46"/>
        <end position="66"/>
    </location>
</feature>
<feature type="transmembrane region" description="Helical" evidence="1">
    <location>
        <begin position="83"/>
        <end position="103"/>
    </location>
</feature>
<feature type="transmembrane region" description="Helical" evidence="1">
    <location>
        <begin position="105"/>
        <end position="125"/>
    </location>
</feature>
<feature type="transmembrane region" description="Helical" evidence="1">
    <location>
        <begin position="156"/>
        <end position="176"/>
    </location>
</feature>
<feature type="transmembrane region" description="Helical" evidence="1">
    <location>
        <begin position="182"/>
        <end position="202"/>
    </location>
</feature>
<feature type="transmembrane region" description="Helical" evidence="1">
    <location>
        <begin position="228"/>
        <end position="248"/>
    </location>
</feature>
<feature type="transmembrane region" description="Helical" evidence="1">
    <location>
        <begin position="276"/>
        <end position="296"/>
    </location>
</feature>
<feature type="transmembrane region" description="Helical" evidence="1">
    <location>
        <begin position="314"/>
        <end position="334"/>
    </location>
</feature>
<feature type="transmembrane region" description="Helical" evidence="1">
    <location>
        <begin position="355"/>
        <end position="375"/>
    </location>
</feature>
<feature type="transmembrane region" description="Helical" evidence="1">
    <location>
        <begin position="389"/>
        <end position="409"/>
    </location>
</feature>
<protein>
    <recommendedName>
        <fullName>Sodium, potassium, lithium and rubidium/H(+) antiporter</fullName>
    </recommendedName>
</protein>
<sequence length="670" mass="75228">MDIFLVVLVLLTIIAISNIVNRFIPFIPVPLIQVALGILAASFPQGLHFELNTELFFVLFIAPLLFNDGKRTPRAELWNLRAPILLLALGLVFATVIVGGYTIHWMIPAIPLAAAFGLAAILSPTDVVAVSALSGRVKMPKGILRLLEGEGLMNDASGLVAFKFAIAAAVTGAFSLAQAAVSFVFISLGGLLCGVVISFLIIRFRLFLRRLGMQDVTMHMLIQILTPFVIYLAAEEIGVSGILAVVAGGITHAVEQDRLESTMIKLQIVSSSTWNIILFILNGLVFVILGTQIPDVISVIFNDTAISNMKVIGYILVITFTLMLLRFLWVLFFWNGKWFFNKDQNIYKPGLRSTLLISISGVRGAVTLAGSFSIPYFLEDGTPFPERNLILFLAAGVILCTLVIATVVLPILTEKEEEDEERNKKLLTARRKLIKTALQTIKEDMNETNKTASLAVIAEYNEKMKNLRFQQYTSSNRIKKHERKVRAQGVKAEQEALMKMLERGDIPEETANVLQERFNELEILYANPFKVGLSKTRLKRLMYWIFFGEHKKPEMSILNEAGLIRATRVKTAKAAIEYLEKHKTDEHKEVFLSVITFYKQLIFRLEHSHHELKSSAHFENQKLEVKLKAVQAIRNEIQTLFEEREISRDISHELRQYINDVEAAMLEGGE</sequence>
<name>NHAK_BACSU</name>
<organism>
    <name type="scientific">Bacillus subtilis (strain 168)</name>
    <dbReference type="NCBI Taxonomy" id="224308"/>
    <lineage>
        <taxon>Bacteria</taxon>
        <taxon>Bacillati</taxon>
        <taxon>Bacillota</taxon>
        <taxon>Bacilli</taxon>
        <taxon>Bacillales</taxon>
        <taxon>Bacillaceae</taxon>
        <taxon>Bacillus</taxon>
    </lineage>
</organism>
<evidence type="ECO:0000255" key="1"/>
<evidence type="ECO:0000269" key="2">
    <source>
    </source>
</evidence>
<evidence type="ECO:0000305" key="3"/>
<proteinExistence type="evidence at protein level"/>
<keyword id="KW-1003">Cell membrane</keyword>
<keyword id="KW-0406">Ion transport</keyword>
<keyword id="KW-0452">Lithium</keyword>
<keyword id="KW-0472">Membrane</keyword>
<keyword id="KW-0630">Potassium</keyword>
<keyword id="KW-0633">Potassium transport</keyword>
<keyword id="KW-1185">Reference proteome</keyword>
<keyword id="KW-0915">Sodium</keyword>
<keyword id="KW-0739">Sodium transport</keyword>
<keyword id="KW-0812">Transmembrane</keyword>
<keyword id="KW-1133">Transmembrane helix</keyword>
<keyword id="KW-0813">Transport</keyword>
<comment type="function">
    <text evidence="2">Transporter involved in the efflux of sodium, potassium, lithium and rubidium.</text>
</comment>
<comment type="subcellular location">
    <subcellularLocation>
        <location evidence="3">Cell membrane</location>
        <topology evidence="3">Multi-pass membrane protein</topology>
    </subcellularLocation>
</comment>
<comment type="induction">
    <text evidence="2">Constitutively expressed, with higher levels at stationary phase.</text>
</comment>
<comment type="similarity">
    <text evidence="3">Belongs to the monovalent cation:proton antiporter 1 (CPA1) transporter (TC 2.A.36) family. Nhak (TC 2.A.36.3.2) subfamily.</text>
</comment>